<accession>B1JNE7</accession>
<dbReference type="EC" id="4.1.3.40" evidence="1"/>
<dbReference type="EMBL" id="CP000950">
    <property type="protein sequence ID" value="ACA70129.1"/>
    <property type="molecule type" value="Genomic_DNA"/>
</dbReference>
<dbReference type="RefSeq" id="WP_002209087.1">
    <property type="nucleotide sequence ID" value="NZ_CP009792.1"/>
</dbReference>
<dbReference type="SMR" id="B1JNE7"/>
<dbReference type="GeneID" id="57974294"/>
<dbReference type="KEGG" id="ypy:YPK_3864"/>
<dbReference type="PATRIC" id="fig|502800.11.peg.211"/>
<dbReference type="UniPathway" id="UPA00232"/>
<dbReference type="GO" id="GO:0005829">
    <property type="term" value="C:cytosol"/>
    <property type="evidence" value="ECO:0007669"/>
    <property type="project" value="TreeGrafter"/>
</dbReference>
<dbReference type="GO" id="GO:0008813">
    <property type="term" value="F:chorismate lyase activity"/>
    <property type="evidence" value="ECO:0007669"/>
    <property type="project" value="UniProtKB-UniRule"/>
</dbReference>
<dbReference type="GO" id="GO:0042866">
    <property type="term" value="P:pyruvate biosynthetic process"/>
    <property type="evidence" value="ECO:0007669"/>
    <property type="project" value="UniProtKB-UniRule"/>
</dbReference>
<dbReference type="GO" id="GO:0006744">
    <property type="term" value="P:ubiquinone biosynthetic process"/>
    <property type="evidence" value="ECO:0007669"/>
    <property type="project" value="UniProtKB-UniRule"/>
</dbReference>
<dbReference type="Gene3D" id="3.40.1410.10">
    <property type="entry name" value="Chorismate lyase-like"/>
    <property type="match status" value="1"/>
</dbReference>
<dbReference type="HAMAP" id="MF_01632">
    <property type="entry name" value="UbiC"/>
    <property type="match status" value="1"/>
</dbReference>
<dbReference type="InterPro" id="IPR007440">
    <property type="entry name" value="Chorismate--pyruvate_lyase"/>
</dbReference>
<dbReference type="InterPro" id="IPR028978">
    <property type="entry name" value="Chorismate_lyase_/UTRA_dom_sf"/>
</dbReference>
<dbReference type="NCBIfam" id="NF008656">
    <property type="entry name" value="PRK11655.1"/>
    <property type="match status" value="1"/>
</dbReference>
<dbReference type="PANTHER" id="PTHR38683">
    <property type="entry name" value="CHORISMATE PYRUVATE-LYASE"/>
    <property type="match status" value="1"/>
</dbReference>
<dbReference type="PANTHER" id="PTHR38683:SF1">
    <property type="entry name" value="CHORISMATE PYRUVATE-LYASE"/>
    <property type="match status" value="1"/>
</dbReference>
<dbReference type="Pfam" id="PF04345">
    <property type="entry name" value="Chor_lyase"/>
    <property type="match status" value="1"/>
</dbReference>
<dbReference type="SUPFAM" id="SSF64288">
    <property type="entry name" value="Chorismate lyase-like"/>
    <property type="match status" value="1"/>
</dbReference>
<organism>
    <name type="scientific">Yersinia pseudotuberculosis serotype O:3 (strain YPIII)</name>
    <dbReference type="NCBI Taxonomy" id="502800"/>
    <lineage>
        <taxon>Bacteria</taxon>
        <taxon>Pseudomonadati</taxon>
        <taxon>Pseudomonadota</taxon>
        <taxon>Gammaproteobacteria</taxon>
        <taxon>Enterobacterales</taxon>
        <taxon>Yersiniaceae</taxon>
        <taxon>Yersinia</taxon>
    </lineage>
</organism>
<name>UBIC_YERPY</name>
<gene>
    <name evidence="1" type="primary">ubiC</name>
    <name type="ordered locus">YPK_3864</name>
</gene>
<proteinExistence type="inferred from homology"/>
<comment type="function">
    <text evidence="1">Removes the pyruvyl group from chorismate, with concomitant aromatization of the ring, to provide 4-hydroxybenzoate (4HB) for the ubiquinone pathway.</text>
</comment>
<comment type="catalytic activity">
    <reaction evidence="1">
        <text>chorismate = 4-hydroxybenzoate + pyruvate</text>
        <dbReference type="Rhea" id="RHEA:16505"/>
        <dbReference type="ChEBI" id="CHEBI:15361"/>
        <dbReference type="ChEBI" id="CHEBI:17879"/>
        <dbReference type="ChEBI" id="CHEBI:29748"/>
        <dbReference type="EC" id="4.1.3.40"/>
    </reaction>
</comment>
<comment type="pathway">
    <text evidence="1">Cofactor biosynthesis; ubiquinone biosynthesis.</text>
</comment>
<comment type="subunit">
    <text evidence="1">Monomer.</text>
</comment>
<comment type="subcellular location">
    <subcellularLocation>
        <location evidence="1">Cytoplasm</location>
    </subcellularLocation>
</comment>
<comment type="similarity">
    <text evidence="1">Belongs to the UbiC family.</text>
</comment>
<keyword id="KW-0963">Cytoplasm</keyword>
<keyword id="KW-0456">Lyase</keyword>
<keyword id="KW-0670">Pyruvate</keyword>
<keyword id="KW-0831">Ubiquinone biosynthesis</keyword>
<feature type="chain" id="PRO_1000186543" description="Chorismate pyruvate-lyase">
    <location>
        <begin position="1"/>
        <end position="174"/>
    </location>
</feature>
<feature type="binding site" evidence="1">
    <location>
        <position position="36"/>
    </location>
    <ligand>
        <name>substrate</name>
    </ligand>
</feature>
<feature type="binding site" evidence="1">
    <location>
        <position position="78"/>
    </location>
    <ligand>
        <name>substrate</name>
    </ligand>
</feature>
<feature type="binding site" evidence="1">
    <location>
        <position position="116"/>
    </location>
    <ligand>
        <name>substrate</name>
    </ligand>
</feature>
<feature type="binding site" evidence="1">
    <location>
        <position position="157"/>
    </location>
    <ligand>
        <name>substrate</name>
    </ligand>
</feature>
<reference key="1">
    <citation type="submission" date="2008-02" db="EMBL/GenBank/DDBJ databases">
        <title>Complete sequence of Yersinia pseudotuberculosis YPIII.</title>
        <authorList>
            <consortium name="US DOE Joint Genome Institute"/>
            <person name="Copeland A."/>
            <person name="Lucas S."/>
            <person name="Lapidus A."/>
            <person name="Glavina del Rio T."/>
            <person name="Dalin E."/>
            <person name="Tice H."/>
            <person name="Bruce D."/>
            <person name="Goodwin L."/>
            <person name="Pitluck S."/>
            <person name="Munk A.C."/>
            <person name="Brettin T."/>
            <person name="Detter J.C."/>
            <person name="Han C."/>
            <person name="Tapia R."/>
            <person name="Schmutz J."/>
            <person name="Larimer F."/>
            <person name="Land M."/>
            <person name="Hauser L."/>
            <person name="Challacombe J.F."/>
            <person name="Green L."/>
            <person name="Lindler L.E."/>
            <person name="Nikolich M.P."/>
            <person name="Richardson P."/>
        </authorList>
    </citation>
    <scope>NUCLEOTIDE SEQUENCE [LARGE SCALE GENOMIC DNA]</scope>
    <source>
        <strain>YPIII</strain>
    </source>
</reference>
<protein>
    <recommendedName>
        <fullName evidence="1">Chorismate pyruvate-lyase</fullName>
        <shortName evidence="1">CL</shortName>
        <shortName evidence="1">CPL</shortName>
        <ecNumber evidence="1">4.1.3.40</ecNumber>
    </recommendedName>
</protein>
<sequence length="174" mass="19916">MFIGDASILKPIQWCATEHPELPADIADWLMELGSMTRRFEQHCQRVHVEPQRECFITRDALGEEAEHLPVSQRYWLREIVLFGDNVPWLLGRTVIPEETLSGPDRALVDLGTLPLGRYLFSGDALTRDYIHVGRQDNLWARRSLLRLSGNPLLLTEVFLPASPLYTHCDSIPK</sequence>
<evidence type="ECO:0000255" key="1">
    <source>
        <dbReference type="HAMAP-Rule" id="MF_01632"/>
    </source>
</evidence>